<comment type="function">
    <text evidence="1">Catalyzes the conversion of (8S)-3',8-cyclo-7,8-dihydroguanosine 5'-triphosphate to cyclic pyranopterin monophosphate (cPMP).</text>
</comment>
<comment type="catalytic activity">
    <reaction evidence="1">
        <text>(8S)-3',8-cyclo-7,8-dihydroguanosine 5'-triphosphate = cyclic pyranopterin phosphate + diphosphate</text>
        <dbReference type="Rhea" id="RHEA:49580"/>
        <dbReference type="ChEBI" id="CHEBI:33019"/>
        <dbReference type="ChEBI" id="CHEBI:59648"/>
        <dbReference type="ChEBI" id="CHEBI:131766"/>
        <dbReference type="EC" id="4.6.1.17"/>
    </reaction>
</comment>
<comment type="pathway">
    <text evidence="1">Cofactor biosynthesis; molybdopterin biosynthesis.</text>
</comment>
<comment type="subunit">
    <text evidence="1">Homohexamer; trimer of dimers.</text>
</comment>
<comment type="similarity">
    <text evidence="1">Belongs to the MoaC family.</text>
</comment>
<protein>
    <recommendedName>
        <fullName evidence="1">Cyclic pyranopterin monophosphate synthase</fullName>
        <ecNumber evidence="1">4.6.1.17</ecNumber>
    </recommendedName>
    <alternativeName>
        <fullName evidence="1">Molybdenum cofactor biosynthesis protein C</fullName>
    </alternativeName>
</protein>
<evidence type="ECO:0000255" key="1">
    <source>
        <dbReference type="HAMAP-Rule" id="MF_01224"/>
    </source>
</evidence>
<name>MOAC_PSEE4</name>
<reference key="1">
    <citation type="journal article" date="2006" name="Nat. Biotechnol.">
        <title>Complete genome sequence of the entomopathogenic and metabolically versatile soil bacterium Pseudomonas entomophila.</title>
        <authorList>
            <person name="Vodovar N."/>
            <person name="Vallenet D."/>
            <person name="Cruveiller S."/>
            <person name="Rouy Z."/>
            <person name="Barbe V."/>
            <person name="Acosta C."/>
            <person name="Cattolico L."/>
            <person name="Jubin C."/>
            <person name="Lajus A."/>
            <person name="Segurens B."/>
            <person name="Vacherie B."/>
            <person name="Wincker P."/>
            <person name="Weissenbach J."/>
            <person name="Lemaitre B."/>
            <person name="Medigue C."/>
            <person name="Boccard F."/>
        </authorList>
    </citation>
    <scope>NUCLEOTIDE SEQUENCE [LARGE SCALE GENOMIC DNA]</scope>
    <source>
        <strain>L48</strain>
    </source>
</reference>
<dbReference type="EC" id="4.6.1.17" evidence="1"/>
<dbReference type="EMBL" id="CT573326">
    <property type="protein sequence ID" value="CAK17211.1"/>
    <property type="molecule type" value="Genomic_DNA"/>
</dbReference>
<dbReference type="RefSeq" id="WP_011535579.1">
    <property type="nucleotide sequence ID" value="NC_008027.1"/>
</dbReference>
<dbReference type="SMR" id="Q1I574"/>
<dbReference type="STRING" id="384676.PSEEN4530"/>
<dbReference type="GeneID" id="32807525"/>
<dbReference type="KEGG" id="pen:PSEEN4530"/>
<dbReference type="eggNOG" id="COG0315">
    <property type="taxonomic scope" value="Bacteria"/>
</dbReference>
<dbReference type="HOGENOM" id="CLU_074693_1_1_6"/>
<dbReference type="OrthoDB" id="9794429at2"/>
<dbReference type="UniPathway" id="UPA00344"/>
<dbReference type="Proteomes" id="UP000000658">
    <property type="component" value="Chromosome"/>
</dbReference>
<dbReference type="GO" id="GO:0061799">
    <property type="term" value="F:cyclic pyranopterin monophosphate synthase activity"/>
    <property type="evidence" value="ECO:0007669"/>
    <property type="project" value="UniProtKB-UniRule"/>
</dbReference>
<dbReference type="GO" id="GO:0006777">
    <property type="term" value="P:Mo-molybdopterin cofactor biosynthetic process"/>
    <property type="evidence" value="ECO:0007669"/>
    <property type="project" value="UniProtKB-UniRule"/>
</dbReference>
<dbReference type="CDD" id="cd01420">
    <property type="entry name" value="MoaC_PE"/>
    <property type="match status" value="1"/>
</dbReference>
<dbReference type="FunFam" id="3.30.70.640:FF:000001">
    <property type="entry name" value="Cyclic pyranopterin monophosphate synthase"/>
    <property type="match status" value="1"/>
</dbReference>
<dbReference type="Gene3D" id="3.30.70.640">
    <property type="entry name" value="Molybdopterin cofactor biosynthesis C (MoaC) domain"/>
    <property type="match status" value="1"/>
</dbReference>
<dbReference type="HAMAP" id="MF_01224_B">
    <property type="entry name" value="MoaC_B"/>
    <property type="match status" value="1"/>
</dbReference>
<dbReference type="InterPro" id="IPR023045">
    <property type="entry name" value="MoaC"/>
</dbReference>
<dbReference type="InterPro" id="IPR047594">
    <property type="entry name" value="MoaC_bact/euk"/>
</dbReference>
<dbReference type="InterPro" id="IPR036522">
    <property type="entry name" value="MoaC_sf"/>
</dbReference>
<dbReference type="InterPro" id="IPR050105">
    <property type="entry name" value="MoCo_biosynth_MoaA/MoaC"/>
</dbReference>
<dbReference type="InterPro" id="IPR002820">
    <property type="entry name" value="Mopterin_CF_biosynth-C_dom"/>
</dbReference>
<dbReference type="NCBIfam" id="TIGR00581">
    <property type="entry name" value="moaC"/>
    <property type="match status" value="1"/>
</dbReference>
<dbReference type="NCBIfam" id="NF006870">
    <property type="entry name" value="PRK09364.1"/>
    <property type="match status" value="1"/>
</dbReference>
<dbReference type="PANTHER" id="PTHR22960:SF29">
    <property type="entry name" value="CYCLIC PYRANOPTERIN MONOPHOSPHATE SYNTHASE"/>
    <property type="match status" value="1"/>
</dbReference>
<dbReference type="PANTHER" id="PTHR22960">
    <property type="entry name" value="MOLYBDOPTERIN COFACTOR SYNTHESIS PROTEIN A"/>
    <property type="match status" value="1"/>
</dbReference>
<dbReference type="Pfam" id="PF01967">
    <property type="entry name" value="MoaC"/>
    <property type="match status" value="1"/>
</dbReference>
<dbReference type="SUPFAM" id="SSF55040">
    <property type="entry name" value="Molybdenum cofactor biosynthesis protein C, MoaC"/>
    <property type="match status" value="1"/>
</dbReference>
<proteinExistence type="inferred from homology"/>
<keyword id="KW-0456">Lyase</keyword>
<keyword id="KW-0501">Molybdenum cofactor biosynthesis</keyword>
<gene>
    <name evidence="1" type="primary">moaC</name>
    <name type="ordered locus">PSEEN4530</name>
</gene>
<feature type="chain" id="PRO_1000054120" description="Cyclic pyranopterin monophosphate synthase">
    <location>
        <begin position="1"/>
        <end position="156"/>
    </location>
</feature>
<feature type="active site" evidence="1">
    <location>
        <position position="125"/>
    </location>
</feature>
<feature type="binding site" evidence="1">
    <location>
        <begin position="73"/>
        <end position="75"/>
    </location>
    <ligand>
        <name>substrate</name>
    </ligand>
</feature>
<feature type="binding site" evidence="1">
    <location>
        <begin position="110"/>
        <end position="111"/>
    </location>
    <ligand>
        <name>substrate</name>
    </ligand>
</feature>
<accession>Q1I574</accession>
<sequence>MLTHLDSQGRANMVDVTEKAVTAREAIAEARVRMLPDTLRMIVDGQHPKGDVFAVARIAGIQAAKKTSDLIPLCHPLMLTGVKVELAAEGEDVVHIVARCKLAGQTGVEMEALTAASVTALTIYDMCKAVDKGMVIEQVRLLEKTGGKSGHYKVEA</sequence>
<organism>
    <name type="scientific">Pseudomonas entomophila (strain L48)</name>
    <dbReference type="NCBI Taxonomy" id="384676"/>
    <lineage>
        <taxon>Bacteria</taxon>
        <taxon>Pseudomonadati</taxon>
        <taxon>Pseudomonadota</taxon>
        <taxon>Gammaproteobacteria</taxon>
        <taxon>Pseudomonadales</taxon>
        <taxon>Pseudomonadaceae</taxon>
        <taxon>Pseudomonas</taxon>
    </lineage>
</organism>